<accession>Q8QL48</accession>
<accession>Q5TJB2</accession>
<feature type="chain" id="PRO_0000342326" description="Uncharacterized protein 306">
    <location>
        <begin position="1"/>
        <end position="306"/>
    </location>
</feature>
<feature type="coiled-coil region" evidence="1">
    <location>
        <begin position="277"/>
        <end position="306"/>
    </location>
</feature>
<feature type="sequence variant" description="In strain: Isolate variant XX.">
    <original>G</original>
    <variation>R</variation>
    <location>
        <position position="271"/>
    </location>
</feature>
<gene>
    <name type="ORF">306</name>
</gene>
<name>Y306_SIRV1</name>
<reference key="1">
    <citation type="journal article" date="2001" name="Virology">
        <title>Sequences and replication of genomes of the archaeal rudiviruses SIRV1 and SIRV2: relationships to the archaeal lipothrixvirus SIFV and some eukaryal viruses.</title>
        <authorList>
            <person name="Peng X."/>
            <person name="Blum H."/>
            <person name="She Q."/>
            <person name="Mallok S."/>
            <person name="Bruegger K."/>
            <person name="Garrett R.A."/>
            <person name="Zillig W."/>
            <person name="Prangishvili D."/>
        </authorList>
    </citation>
    <scope>NUCLEOTIDE SEQUENCE [LARGE SCALE GENOMIC DNA]</scope>
    <source>
        <strain>Isolate variant VIII</strain>
    </source>
</reference>
<reference key="2">
    <citation type="journal article" date="2004" name="Mol. Microbiol.">
        <title>Multiple variants of the archaeal DNA rudivirus SIRV1 in a single host and a novel mechanism of genomic variation.</title>
        <authorList>
            <person name="Peng X."/>
            <person name="Kessler A."/>
            <person name="Phan H."/>
            <person name="Garrett R.A."/>
            <person name="Prangishvili D."/>
        </authorList>
    </citation>
    <scope>NUCLEOTIDE SEQUENCE [LARGE SCALE GENOMIC DNA]</scope>
    <source>
        <strain>Isolate variant XX</strain>
    </source>
</reference>
<keyword id="KW-0175">Coiled coil</keyword>
<keyword id="KW-1185">Reference proteome</keyword>
<evidence type="ECO:0000255" key="1"/>
<proteinExistence type="predicted"/>
<dbReference type="EMBL" id="AJ414696">
    <property type="protein sequence ID" value="CAC93961.1"/>
    <property type="molecule type" value="Genomic_DNA"/>
</dbReference>
<dbReference type="EMBL" id="AJ748296">
    <property type="protein sequence ID" value="CAG38826.1"/>
    <property type="molecule type" value="Genomic_DNA"/>
</dbReference>
<dbReference type="RefSeq" id="NP_666594.1">
    <property type="nucleotide sequence ID" value="NC_004087.1"/>
</dbReference>
<dbReference type="KEGG" id="vg:951363"/>
<dbReference type="OrthoDB" id="7085at10239"/>
<dbReference type="Proteomes" id="UP000002270">
    <property type="component" value="Genome"/>
</dbReference>
<dbReference type="Proteomes" id="UP000223181">
    <property type="component" value="Segment"/>
</dbReference>
<dbReference type="GO" id="GO:0006400">
    <property type="term" value="P:tRNA modification"/>
    <property type="evidence" value="ECO:0007669"/>
    <property type="project" value="InterPro"/>
</dbReference>
<dbReference type="Gene3D" id="3.20.20.105">
    <property type="entry name" value="Queuine tRNA-ribosyltransferase-like"/>
    <property type="match status" value="1"/>
</dbReference>
<dbReference type="InterPro" id="IPR036511">
    <property type="entry name" value="TGT-like_sf"/>
</dbReference>
<dbReference type="SUPFAM" id="SSF51713">
    <property type="entry name" value="tRNA-guanine transglycosylase"/>
    <property type="match status" value="1"/>
</dbReference>
<organismHost>
    <name type="scientific">Saccharolobus islandicus</name>
    <name type="common">Sulfolobus islandicus</name>
    <dbReference type="NCBI Taxonomy" id="43080"/>
</organismHost>
<protein>
    <recommendedName>
        <fullName>Uncharacterized protein 306</fullName>
    </recommendedName>
</protein>
<sequence length="306" mass="36832">MKIVFGIVSSQDLLIKINFPILINQLRNKKITWKNETWVDSGGYQIALYNLKISVKDVLEKYKTYNAYAFFSLDIPSIFSPLDRKNFEYFEYLYTKMEYIERIIPVIHLYPTREVDEAIDFYSQYTDYIAFGGIIASSKLKILIYTFPWYYYIRKYVKRLHVLGMSAPYFLQIFDTANSMDTTTYTKTASYREIFWFDGTRRYVGDRKERTLTKEEEEKLFEFLDKTNFPFEYDFSNVKILKTMNAWILKYNNWNIKNKYTIYAEKLRKMGLDSLVTEIIQNYKIANELKKEKQQNKKKNSIELEE</sequence>
<organism>
    <name type="scientific">Sulfolobus islandicus rod-shaped virus 1</name>
    <name type="common">SIRV-1</name>
    <name type="synonym">Sulfolobus virus SIRV-1</name>
    <dbReference type="NCBI Taxonomy" id="157898"/>
    <lineage>
        <taxon>Viruses</taxon>
        <taxon>Adnaviria</taxon>
        <taxon>Zilligvirae</taxon>
        <taxon>Taleaviricota</taxon>
        <taxon>Tokiviricetes</taxon>
        <taxon>Ligamenvirales</taxon>
        <taxon>Rudiviridae</taxon>
        <taxon>Icerudivirus</taxon>
        <taxon>Icerudivirus SIRV1</taxon>
    </lineage>
</organism>